<proteinExistence type="inferred from homology"/>
<keyword id="KW-0067">ATP-binding</keyword>
<keyword id="KW-0238">DNA-binding</keyword>
<keyword id="KW-0255">Endonuclease</keyword>
<keyword id="KW-0378">Hydrolase</keyword>
<keyword id="KW-0540">Nuclease</keyword>
<keyword id="KW-0547">Nucleotide-binding</keyword>
<keyword id="KW-0694">RNA-binding</keyword>
<keyword id="KW-0699">rRNA-binding</keyword>
<evidence type="ECO:0000255" key="1">
    <source>
        <dbReference type="HAMAP-Rule" id="MF_00092"/>
    </source>
</evidence>
<comment type="function">
    <text evidence="1">Endonuclease that is involved in the suppression of homologous recombination and thus may have a key role in the control of bacterial genetic diversity.</text>
</comment>
<comment type="function">
    <text evidence="1">Acts as a ribosome collision sensor, splitting the ribosome into its 2 subunits. Detects stalled/collided 70S ribosomes which it binds and splits by an ATP-hydrolysis driven conformational change. Acts upstream of the ribosome quality control system (RQC), a ribosome-associated complex that mediates the extraction of incompletely synthesized nascent chains from stalled ribosomes and their subsequent degradation. Probably generates substrates for RQC.</text>
</comment>
<comment type="subunit">
    <text evidence="1">Homodimer. Binds to stalled ribosomes, contacting rRNA.</text>
</comment>
<comment type="similarity">
    <text evidence="1">Belongs to the DNA mismatch repair MutS family. MutS2 subfamily.</text>
</comment>
<name>MUTS2_STRS7</name>
<sequence>MEKKILEQLEFEKVKEQFWPYLQTEQGQLELDLLEPIANKDKIQAYFTELEEMAAIFVEHHHFALGGLSDVSESMQRLDLEADLSIQELLVIKKLLQVSAEVCRFYADLENVDLVALKALFEKIESFPSLQGSLQAINDAGFVEGFASPELESIRRQISNKEHASRQLLQDILKKQAAYLSESLIASRNGRSVLPVKNTYRHKVAGVVHDMSASGSTVYIEPRALVSLNEELTQLQADERHEIGRILHELSEQLRPHSRSLRNNAWLLGHLDLVRAKYLYMQAKQATVPVISDDKSLQLLNARHPLIQNPVANDLHFANDLAVIVITGPNTGGKTIMLKTLGLAQVMAQSGLPILADKGSRVAVFNGIYADIGDEQSIEQSLSTFSSHMTHIVEILNQADSDSLILFDELGAGTDPQEGASLAMAILEQLRLTNIKTMATTHYPELKAYGIETAYVENASMAFDNVSLKPTYRFMQGVPGRSNAFDIARRLGLAEHIVKEAQAMTATDHDVNRIIEQLEQQTLESRKRLEHIKEVEQDNLKFNRAVKKLYNEFSHAKDKELEKAALEAREIVDIALAESDSILSQLHEKAELKPHEIIEAKHRLKQLAPEQSLSQNKVLKQAKKWRAPRVGDDIIVTAYGQRGTLLAQLKDKRWEAQVGLIKLTLKEDEFSLVKLKEEAQQPKKRAVKVVKKAATGKGPRARLDLRGKRYEEAMQELDAFIDQALLNNMSQVDIIHGIGTGVIREAVGKYLRRNKHVKSFGYAPQNAGGSGCTIANLG</sequence>
<dbReference type="EC" id="3.1.-.-" evidence="1"/>
<dbReference type="EC" id="3.6.4.-" evidence="1"/>
<dbReference type="EMBL" id="FM204884">
    <property type="protein sequence ID" value="CAX00391.1"/>
    <property type="molecule type" value="Genomic_DNA"/>
</dbReference>
<dbReference type="SMR" id="C0MEM8"/>
<dbReference type="KEGG" id="seq:SZO_16410"/>
<dbReference type="PATRIC" id="fig|40041.11.peg.1760"/>
<dbReference type="eggNOG" id="COG1193">
    <property type="taxonomic scope" value="Bacteria"/>
</dbReference>
<dbReference type="HOGENOM" id="CLU_011252_2_1_9"/>
<dbReference type="Proteomes" id="UP000001368">
    <property type="component" value="Chromosome"/>
</dbReference>
<dbReference type="GO" id="GO:0005524">
    <property type="term" value="F:ATP binding"/>
    <property type="evidence" value="ECO:0007669"/>
    <property type="project" value="UniProtKB-UniRule"/>
</dbReference>
<dbReference type="GO" id="GO:0016887">
    <property type="term" value="F:ATP hydrolysis activity"/>
    <property type="evidence" value="ECO:0007669"/>
    <property type="project" value="InterPro"/>
</dbReference>
<dbReference type="GO" id="GO:0140664">
    <property type="term" value="F:ATP-dependent DNA damage sensor activity"/>
    <property type="evidence" value="ECO:0007669"/>
    <property type="project" value="InterPro"/>
</dbReference>
<dbReference type="GO" id="GO:0004519">
    <property type="term" value="F:endonuclease activity"/>
    <property type="evidence" value="ECO:0007669"/>
    <property type="project" value="UniProtKB-UniRule"/>
</dbReference>
<dbReference type="GO" id="GO:0030983">
    <property type="term" value="F:mismatched DNA binding"/>
    <property type="evidence" value="ECO:0007669"/>
    <property type="project" value="InterPro"/>
</dbReference>
<dbReference type="GO" id="GO:0043023">
    <property type="term" value="F:ribosomal large subunit binding"/>
    <property type="evidence" value="ECO:0007669"/>
    <property type="project" value="UniProtKB-UniRule"/>
</dbReference>
<dbReference type="GO" id="GO:0019843">
    <property type="term" value="F:rRNA binding"/>
    <property type="evidence" value="ECO:0007669"/>
    <property type="project" value="UniProtKB-UniRule"/>
</dbReference>
<dbReference type="GO" id="GO:0006298">
    <property type="term" value="P:mismatch repair"/>
    <property type="evidence" value="ECO:0007669"/>
    <property type="project" value="InterPro"/>
</dbReference>
<dbReference type="GO" id="GO:0045910">
    <property type="term" value="P:negative regulation of DNA recombination"/>
    <property type="evidence" value="ECO:0007669"/>
    <property type="project" value="InterPro"/>
</dbReference>
<dbReference type="GO" id="GO:0072344">
    <property type="term" value="P:rescue of stalled ribosome"/>
    <property type="evidence" value="ECO:0007669"/>
    <property type="project" value="UniProtKB-UniRule"/>
</dbReference>
<dbReference type="FunFam" id="3.40.50.300:FF:000830">
    <property type="entry name" value="Endonuclease MutS2"/>
    <property type="match status" value="1"/>
</dbReference>
<dbReference type="Gene3D" id="3.30.1370.110">
    <property type="match status" value="1"/>
</dbReference>
<dbReference type="Gene3D" id="3.40.50.300">
    <property type="entry name" value="P-loop containing nucleotide triphosphate hydrolases"/>
    <property type="match status" value="1"/>
</dbReference>
<dbReference type="HAMAP" id="MF_00092">
    <property type="entry name" value="MutS2"/>
    <property type="match status" value="1"/>
</dbReference>
<dbReference type="InterPro" id="IPR000432">
    <property type="entry name" value="DNA_mismatch_repair_MutS_C"/>
</dbReference>
<dbReference type="InterPro" id="IPR007696">
    <property type="entry name" value="DNA_mismatch_repair_MutS_core"/>
</dbReference>
<dbReference type="InterPro" id="IPR036187">
    <property type="entry name" value="DNA_mismatch_repair_MutS_sf"/>
</dbReference>
<dbReference type="InterPro" id="IPR046893">
    <property type="entry name" value="MSSS"/>
</dbReference>
<dbReference type="InterPro" id="IPR045076">
    <property type="entry name" value="MutS"/>
</dbReference>
<dbReference type="InterPro" id="IPR005747">
    <property type="entry name" value="MutS2"/>
</dbReference>
<dbReference type="InterPro" id="IPR027417">
    <property type="entry name" value="P-loop_NTPase"/>
</dbReference>
<dbReference type="InterPro" id="IPR002625">
    <property type="entry name" value="Smr_dom"/>
</dbReference>
<dbReference type="InterPro" id="IPR036063">
    <property type="entry name" value="Smr_dom_sf"/>
</dbReference>
<dbReference type="NCBIfam" id="TIGR01069">
    <property type="entry name" value="mutS2"/>
    <property type="match status" value="1"/>
</dbReference>
<dbReference type="PANTHER" id="PTHR48466:SF2">
    <property type="entry name" value="OS10G0509000 PROTEIN"/>
    <property type="match status" value="1"/>
</dbReference>
<dbReference type="PANTHER" id="PTHR48466">
    <property type="entry name" value="OS10G0509000 PROTEIN-RELATED"/>
    <property type="match status" value="1"/>
</dbReference>
<dbReference type="Pfam" id="PF20297">
    <property type="entry name" value="MSSS"/>
    <property type="match status" value="1"/>
</dbReference>
<dbReference type="Pfam" id="PF00488">
    <property type="entry name" value="MutS_V"/>
    <property type="match status" value="1"/>
</dbReference>
<dbReference type="Pfam" id="PF01713">
    <property type="entry name" value="Smr"/>
    <property type="match status" value="1"/>
</dbReference>
<dbReference type="PIRSF" id="PIRSF005814">
    <property type="entry name" value="MutS_YshD"/>
    <property type="match status" value="1"/>
</dbReference>
<dbReference type="SMART" id="SM00534">
    <property type="entry name" value="MUTSac"/>
    <property type="match status" value="1"/>
</dbReference>
<dbReference type="SMART" id="SM00533">
    <property type="entry name" value="MUTSd"/>
    <property type="match status" value="1"/>
</dbReference>
<dbReference type="SMART" id="SM00463">
    <property type="entry name" value="SMR"/>
    <property type="match status" value="1"/>
</dbReference>
<dbReference type="SUPFAM" id="SSF48334">
    <property type="entry name" value="DNA repair protein MutS, domain III"/>
    <property type="match status" value="1"/>
</dbReference>
<dbReference type="SUPFAM" id="SSF52540">
    <property type="entry name" value="P-loop containing nucleoside triphosphate hydrolases"/>
    <property type="match status" value="1"/>
</dbReference>
<dbReference type="SUPFAM" id="SSF160443">
    <property type="entry name" value="SMR domain-like"/>
    <property type="match status" value="1"/>
</dbReference>
<dbReference type="PROSITE" id="PS00486">
    <property type="entry name" value="DNA_MISMATCH_REPAIR_2"/>
    <property type="match status" value="1"/>
</dbReference>
<dbReference type="PROSITE" id="PS50828">
    <property type="entry name" value="SMR"/>
    <property type="match status" value="1"/>
</dbReference>
<gene>
    <name evidence="1" type="primary">mutS2</name>
    <name evidence="1" type="synonym">rqcU</name>
    <name type="ordered locus">SZO_16410</name>
</gene>
<organism>
    <name type="scientific">Streptococcus equi subsp. zooepidemicus (strain H70)</name>
    <dbReference type="NCBI Taxonomy" id="553483"/>
    <lineage>
        <taxon>Bacteria</taxon>
        <taxon>Bacillati</taxon>
        <taxon>Bacillota</taxon>
        <taxon>Bacilli</taxon>
        <taxon>Lactobacillales</taxon>
        <taxon>Streptococcaceae</taxon>
        <taxon>Streptococcus</taxon>
    </lineage>
</organism>
<reference key="1">
    <citation type="journal article" date="2009" name="PLoS Pathog.">
        <title>Genomic evidence for the evolution of Streptococcus equi: host restriction, increased virulence, and genetic exchange with human pathogens.</title>
        <authorList>
            <person name="Holden M.T.G."/>
            <person name="Heather Z."/>
            <person name="Paillot R."/>
            <person name="Steward K.F."/>
            <person name="Webb K."/>
            <person name="Ainslie F."/>
            <person name="Jourdan T."/>
            <person name="Bason N.C."/>
            <person name="Holroyd N.E."/>
            <person name="Mungall K."/>
            <person name="Quail M.A."/>
            <person name="Sanders M."/>
            <person name="Simmonds M."/>
            <person name="Willey D."/>
            <person name="Brooks K."/>
            <person name="Aanensen D.M."/>
            <person name="Spratt B.G."/>
            <person name="Jolley K.A."/>
            <person name="Maiden M.C.J."/>
            <person name="Kehoe M."/>
            <person name="Chanter N."/>
            <person name="Bentley S.D."/>
            <person name="Robinson C."/>
            <person name="Maskell D.J."/>
            <person name="Parkhill J."/>
            <person name="Waller A.S."/>
        </authorList>
    </citation>
    <scope>NUCLEOTIDE SEQUENCE [LARGE SCALE GENOMIC DNA]</scope>
    <source>
        <strain>H70</strain>
    </source>
</reference>
<feature type="chain" id="PRO_1000202684" description="Endonuclease MutS2">
    <location>
        <begin position="1"/>
        <end position="778"/>
    </location>
</feature>
<feature type="domain" description="Smr" evidence="1">
    <location>
        <begin position="703"/>
        <end position="778"/>
    </location>
</feature>
<feature type="binding site" evidence="1">
    <location>
        <begin position="328"/>
        <end position="335"/>
    </location>
    <ligand>
        <name>ATP</name>
        <dbReference type="ChEBI" id="CHEBI:30616"/>
    </ligand>
</feature>
<protein>
    <recommendedName>
        <fullName evidence="1">Endonuclease MutS2</fullName>
        <ecNumber evidence="1">3.1.-.-</ecNumber>
    </recommendedName>
    <alternativeName>
        <fullName evidence="1">Ribosome-associated protein quality control-upstream factor</fullName>
        <shortName evidence="1">RQC-upstream factor</shortName>
        <shortName evidence="1">RqcU</shortName>
        <ecNumber evidence="1">3.6.4.-</ecNumber>
    </alternativeName>
</protein>
<accession>C0MEM8</accession>